<sequence length="126" mass="14349">MLSRLIQHITSIFVFSFFFLFFFFSLKRCPRDVKREGNEIFTGNVTTITQVYLESTNVSAYLGCQCNNIETIICLQNSGNTTISAYHVHISEIGSVALQTEGALLVFSPIFCFLVKFVYRQRIALV</sequence>
<organism>
    <name type="scientific">Saccharomyces cerevisiae (strain ATCC 204508 / S288c)</name>
    <name type="common">Baker's yeast</name>
    <dbReference type="NCBI Taxonomy" id="559292"/>
    <lineage>
        <taxon>Eukaryota</taxon>
        <taxon>Fungi</taxon>
        <taxon>Dikarya</taxon>
        <taxon>Ascomycota</taxon>
        <taxon>Saccharomycotina</taxon>
        <taxon>Saccharomycetes</taxon>
        <taxon>Saccharomycetales</taxon>
        <taxon>Saccharomycetaceae</taxon>
        <taxon>Saccharomyces</taxon>
    </lineage>
</organism>
<reference key="1">
    <citation type="journal article" date="1997" name="Nature">
        <title>The nucleotide sequence of Saccharomyces cerevisiae chromosome XII.</title>
        <authorList>
            <person name="Johnston M."/>
            <person name="Hillier L.W."/>
            <person name="Riles L."/>
            <person name="Albermann K."/>
            <person name="Andre B."/>
            <person name="Ansorge W."/>
            <person name="Benes V."/>
            <person name="Brueckner M."/>
            <person name="Delius H."/>
            <person name="Dubois E."/>
            <person name="Duesterhoeft A."/>
            <person name="Entian K.-D."/>
            <person name="Floeth M."/>
            <person name="Goffeau A."/>
            <person name="Hebling U."/>
            <person name="Heumann K."/>
            <person name="Heuss-Neitzel D."/>
            <person name="Hilbert H."/>
            <person name="Hilger F."/>
            <person name="Kleine K."/>
            <person name="Koetter P."/>
            <person name="Louis E.J."/>
            <person name="Messenguy F."/>
            <person name="Mewes H.-W."/>
            <person name="Miosga T."/>
            <person name="Moestl D."/>
            <person name="Mueller-Auer S."/>
            <person name="Nentwich U."/>
            <person name="Obermaier B."/>
            <person name="Piravandi E."/>
            <person name="Pohl T.M."/>
            <person name="Portetelle D."/>
            <person name="Purnelle B."/>
            <person name="Rechmann S."/>
            <person name="Rieger M."/>
            <person name="Rinke M."/>
            <person name="Rose M."/>
            <person name="Scharfe M."/>
            <person name="Scherens B."/>
            <person name="Scholler P."/>
            <person name="Schwager C."/>
            <person name="Schwarz S."/>
            <person name="Underwood A.P."/>
            <person name="Urrestarazu L.A."/>
            <person name="Vandenbol M."/>
            <person name="Verhasselt P."/>
            <person name="Vierendeels F."/>
            <person name="Voet M."/>
            <person name="Volckaert G."/>
            <person name="Voss H."/>
            <person name="Wambutt R."/>
            <person name="Wedler E."/>
            <person name="Wedler H."/>
            <person name="Zimmermann F.K."/>
            <person name="Zollner A."/>
            <person name="Hani J."/>
            <person name="Hoheisel J.D."/>
        </authorList>
    </citation>
    <scope>NUCLEOTIDE SEQUENCE [LARGE SCALE GENOMIC DNA]</scope>
    <source>
        <strain>ATCC 204508 / S288c</strain>
    </source>
</reference>
<reference key="2">
    <citation type="journal article" date="2014" name="G3 (Bethesda)">
        <title>The reference genome sequence of Saccharomyces cerevisiae: Then and now.</title>
        <authorList>
            <person name="Engel S.R."/>
            <person name="Dietrich F.S."/>
            <person name="Fisk D.G."/>
            <person name="Binkley G."/>
            <person name="Balakrishnan R."/>
            <person name="Costanzo M.C."/>
            <person name="Dwight S.S."/>
            <person name="Hitz B.C."/>
            <person name="Karra K."/>
            <person name="Nash R.S."/>
            <person name="Weng S."/>
            <person name="Wong E.D."/>
            <person name="Lloyd P."/>
            <person name="Skrzypek M.S."/>
            <person name="Miyasato S.R."/>
            <person name="Simison M."/>
            <person name="Cherry J.M."/>
        </authorList>
    </citation>
    <scope>GENOME REANNOTATION</scope>
    <source>
        <strain>ATCC 204508 / S288c</strain>
    </source>
</reference>
<protein>
    <recommendedName>
        <fullName>Putative uncharacterized protein YLL037W</fullName>
    </recommendedName>
</protein>
<evidence type="ECO:0000255" key="1"/>
<evidence type="ECO:0000305" key="2"/>
<evidence type="ECO:0000305" key="3">
    <source>
    </source>
</evidence>
<dbReference type="EMBL" id="Z73142">
    <property type="protein sequence ID" value="CAA97486.1"/>
    <property type="molecule type" value="Genomic_DNA"/>
</dbReference>
<dbReference type="PIR" id="S64788">
    <property type="entry name" value="S64788"/>
</dbReference>
<dbReference type="SMR" id="Q07865"/>
<dbReference type="DIP" id="DIP-4949N"/>
<dbReference type="IntAct" id="Q07865">
    <property type="interactions" value="3"/>
</dbReference>
<dbReference type="STRING" id="4932.YLL037W"/>
<dbReference type="PaxDb" id="4932-YLL037W"/>
<dbReference type="EnsemblFungi" id="YLL037W_mRNA">
    <property type="protein sequence ID" value="YLL037W"/>
    <property type="gene ID" value="YLL037W"/>
</dbReference>
<dbReference type="AGR" id="SGD:S000003960"/>
<dbReference type="SGD" id="S000003960">
    <property type="gene designation" value="YLL037W"/>
</dbReference>
<dbReference type="HOGENOM" id="CLU_1983320_0_0_1"/>
<dbReference type="GO" id="GO:0016020">
    <property type="term" value="C:membrane"/>
    <property type="evidence" value="ECO:0007669"/>
    <property type="project" value="UniProtKB-SubCell"/>
</dbReference>
<comment type="subcellular location">
    <subcellularLocation>
        <location evidence="2">Membrane</location>
        <topology evidence="2">Single-pass membrane protein</topology>
    </subcellularLocation>
</comment>
<comment type="miscellaneous">
    <text evidence="2">Partially overlaps PRP19.</text>
</comment>
<comment type="caution">
    <text evidence="3">Product of a dubious gene prediction unlikely to encode a functional protein. Because of that it is not part of the S.cerevisiae S288c complete/reference proteome set.</text>
</comment>
<feature type="chain" id="PRO_0000299604" description="Putative uncharacterized protein YLL037W">
    <location>
        <begin position="1"/>
        <end position="126"/>
    </location>
</feature>
<feature type="transmembrane region" description="Helical" evidence="1">
    <location>
        <begin position="5"/>
        <end position="25"/>
    </location>
</feature>
<keyword id="KW-0472">Membrane</keyword>
<keyword id="KW-0812">Transmembrane</keyword>
<keyword id="KW-1133">Transmembrane helix</keyword>
<proteinExistence type="uncertain"/>
<accession>Q07865</accession>
<name>YL037_YEAST</name>
<gene>
    <name type="ordered locus">YLL037W</name>
    <name type="ORF">L0910</name>
</gene>